<sequence length="502" mass="53499">MPVKGLKVEAASIDPGHDAVILNPRDAEHLGVVAGLRASVVCRGRGVGAVVIVDPRVPERVAQLTKGLVERLGDCDTVDVHPIDVPPSFDAFKKRLSGARLSAAEYKMLIADIVAGYYDDAQIASFLVSQLYSKLADEELEHLIRAMVETGEVVKFGEPVYDVHSIGGVPGNSKVALLVVPIVASRGLLIPKTSSRAITSPAGTADTMEVLAKVAFKPQELHDMALRARGLIVWGGALNLAPADDIFVRVERRIGVDPPTQMVASILAKKLAMSVSRLVIDLPTGRGAKVQDESEAELLASMFLAQAGRLNIAMRVAITFGGEPIGFSVGPALEAREALQTLMKGDGASSLVEKACSLAGLVFELGGVVPRGRGYSLACEILRSGAAYRKFREIIEVQEGDPDIKPEDIKLAPKQFTLEAPRDGIVTMIDNRAISLAARAAGAPEDKGAGIQLHVKTGYRVRKGDPLLTIYASSDTRLHEAVRLLDEYNAVLIEGVVVKVLP</sequence>
<protein>
    <recommendedName>
        <fullName evidence="1">AMP phosphorylase</fullName>
        <shortName evidence="1">AMPpase</shortName>
        <ecNumber evidence="1">2.4.2.57</ecNumber>
    </recommendedName>
    <alternativeName>
        <fullName evidence="1">Nucleoside monophosphate phosphorylase</fullName>
        <shortName evidence="1">NMP phosphorylase</shortName>
    </alternativeName>
</protein>
<evidence type="ECO:0000255" key="1">
    <source>
        <dbReference type="HAMAP-Rule" id="MF_02132"/>
    </source>
</evidence>
<name>AMPPA_HYPBU</name>
<organism>
    <name type="scientific">Hyperthermus butylicus (strain DSM 5456 / JCM 9403 / PLM1-5)</name>
    <dbReference type="NCBI Taxonomy" id="415426"/>
    <lineage>
        <taxon>Archaea</taxon>
        <taxon>Thermoproteota</taxon>
        <taxon>Thermoprotei</taxon>
        <taxon>Desulfurococcales</taxon>
        <taxon>Pyrodictiaceae</taxon>
        <taxon>Hyperthermus</taxon>
    </lineage>
</organism>
<comment type="function">
    <text evidence="1">Catalyzes the conversion of AMP and phosphate to adenine and ribose 1,5-bisphosphate (R15P). Exhibits phosphorylase activity toward CMP and UMP in addition to AMP. Functions in an archaeal AMP degradation pathway, together with R15P isomerase and RubisCO.</text>
</comment>
<comment type="catalytic activity">
    <reaction evidence="1">
        <text>AMP + phosphate = alpha-D-ribose 1,5-bisphosphate + adenine</text>
        <dbReference type="Rhea" id="RHEA:36975"/>
        <dbReference type="ChEBI" id="CHEBI:16708"/>
        <dbReference type="ChEBI" id="CHEBI:43474"/>
        <dbReference type="ChEBI" id="CHEBI:68688"/>
        <dbReference type="ChEBI" id="CHEBI:456215"/>
        <dbReference type="EC" id="2.4.2.57"/>
    </reaction>
</comment>
<comment type="catalytic activity">
    <reaction evidence="1">
        <text>CMP + phosphate = cytosine + alpha-D-ribose 1,5-bisphosphate</text>
        <dbReference type="Rhea" id="RHEA:36987"/>
        <dbReference type="ChEBI" id="CHEBI:16040"/>
        <dbReference type="ChEBI" id="CHEBI:43474"/>
        <dbReference type="ChEBI" id="CHEBI:60377"/>
        <dbReference type="ChEBI" id="CHEBI:68688"/>
        <dbReference type="EC" id="2.4.2.57"/>
    </reaction>
</comment>
<comment type="catalytic activity">
    <reaction evidence="1">
        <text>UMP + phosphate = alpha-D-ribose 1,5-bisphosphate + uracil</text>
        <dbReference type="Rhea" id="RHEA:36991"/>
        <dbReference type="ChEBI" id="CHEBI:17568"/>
        <dbReference type="ChEBI" id="CHEBI:43474"/>
        <dbReference type="ChEBI" id="CHEBI:57865"/>
        <dbReference type="ChEBI" id="CHEBI:68688"/>
        <dbReference type="EC" id="2.4.2.57"/>
    </reaction>
</comment>
<comment type="similarity">
    <text evidence="1">Belongs to the thymidine/pyrimidine-nucleoside phosphorylase family. Type 2 subfamily.</text>
</comment>
<dbReference type="EC" id="2.4.2.57" evidence="1"/>
<dbReference type="EMBL" id="CP000493">
    <property type="protein sequence ID" value="ABM80251.1"/>
    <property type="molecule type" value="Genomic_DNA"/>
</dbReference>
<dbReference type="RefSeq" id="WP_011821569.1">
    <property type="nucleotide sequence ID" value="NC_008818.1"/>
</dbReference>
<dbReference type="SMR" id="A2BJU0"/>
<dbReference type="STRING" id="415426.Hbut_0381"/>
<dbReference type="EnsemblBacteria" id="ABM80251">
    <property type="protein sequence ID" value="ABM80251"/>
    <property type="gene ID" value="Hbut_0381"/>
</dbReference>
<dbReference type="GeneID" id="4782885"/>
<dbReference type="KEGG" id="hbu:Hbut_0381"/>
<dbReference type="eggNOG" id="arCOG02013">
    <property type="taxonomic scope" value="Archaea"/>
</dbReference>
<dbReference type="HOGENOM" id="CLU_025040_6_0_2"/>
<dbReference type="OrthoDB" id="9827at2157"/>
<dbReference type="Proteomes" id="UP000002593">
    <property type="component" value="Chromosome"/>
</dbReference>
<dbReference type="GO" id="GO:0005829">
    <property type="term" value="C:cytosol"/>
    <property type="evidence" value="ECO:0007669"/>
    <property type="project" value="TreeGrafter"/>
</dbReference>
<dbReference type="GO" id="GO:0004645">
    <property type="term" value="F:1,4-alpha-oligoglucan phosphorylase activity"/>
    <property type="evidence" value="ECO:0007669"/>
    <property type="project" value="InterPro"/>
</dbReference>
<dbReference type="GO" id="GO:0016208">
    <property type="term" value="F:AMP binding"/>
    <property type="evidence" value="ECO:0007669"/>
    <property type="project" value="UniProtKB-UniRule"/>
</dbReference>
<dbReference type="GO" id="GO:0016763">
    <property type="term" value="F:pentosyltransferase activity"/>
    <property type="evidence" value="ECO:0007669"/>
    <property type="project" value="UniProtKB-UniRule"/>
</dbReference>
<dbReference type="GO" id="GO:0006196">
    <property type="term" value="P:AMP catabolic process"/>
    <property type="evidence" value="ECO:0007669"/>
    <property type="project" value="UniProtKB-UniRule"/>
</dbReference>
<dbReference type="GO" id="GO:0046125">
    <property type="term" value="P:pyrimidine deoxyribonucleoside metabolic process"/>
    <property type="evidence" value="ECO:0007669"/>
    <property type="project" value="InterPro"/>
</dbReference>
<dbReference type="GO" id="GO:0006206">
    <property type="term" value="P:pyrimidine nucleobase metabolic process"/>
    <property type="evidence" value="ECO:0007669"/>
    <property type="project" value="InterPro"/>
</dbReference>
<dbReference type="Gene3D" id="1.20.970.50">
    <property type="match status" value="1"/>
</dbReference>
<dbReference type="Gene3D" id="3.40.1030.10">
    <property type="entry name" value="Nucleoside phosphorylase/phosphoribosyltransferase catalytic domain"/>
    <property type="match status" value="1"/>
</dbReference>
<dbReference type="Gene3D" id="3.90.1170.30">
    <property type="entry name" value="Pyrimidine nucleoside phosphorylase-like, C-terminal domain"/>
    <property type="match status" value="1"/>
</dbReference>
<dbReference type="HAMAP" id="MF_02132">
    <property type="entry name" value="AMP_phosphorylase"/>
    <property type="match status" value="1"/>
</dbReference>
<dbReference type="InterPro" id="IPR017713">
    <property type="entry name" value="AMP_phosphorylase"/>
</dbReference>
<dbReference type="InterPro" id="IPR000312">
    <property type="entry name" value="Glycosyl_Trfase_fam3"/>
</dbReference>
<dbReference type="InterPro" id="IPR017459">
    <property type="entry name" value="Glycosyl_Trfase_fam3_N_dom"/>
</dbReference>
<dbReference type="InterPro" id="IPR036320">
    <property type="entry name" value="Glycosyl_Trfase_fam3_N_dom_sf"/>
</dbReference>
<dbReference type="InterPro" id="IPR035902">
    <property type="entry name" value="Nuc_phospho_transferase"/>
</dbReference>
<dbReference type="InterPro" id="IPR036566">
    <property type="entry name" value="PYNP-like_C_sf"/>
</dbReference>
<dbReference type="InterPro" id="IPR013102">
    <property type="entry name" value="PYNP_C"/>
</dbReference>
<dbReference type="InterPro" id="IPR017872">
    <property type="entry name" value="Pyrmidine_PPase_CS"/>
</dbReference>
<dbReference type="InterPro" id="IPR013466">
    <property type="entry name" value="Thymidine/AMP_Pase"/>
</dbReference>
<dbReference type="InterPro" id="IPR000053">
    <property type="entry name" value="Thymidine/pyrmidine_PPase"/>
</dbReference>
<dbReference type="NCBIfam" id="TIGR03327">
    <property type="entry name" value="AMP_phos"/>
    <property type="match status" value="1"/>
</dbReference>
<dbReference type="NCBIfam" id="TIGR02645">
    <property type="entry name" value="ARCH_P_rylase"/>
    <property type="match status" value="1"/>
</dbReference>
<dbReference type="NCBIfam" id="NF003338">
    <property type="entry name" value="PRK04350.1"/>
    <property type="match status" value="1"/>
</dbReference>
<dbReference type="PANTHER" id="PTHR10515">
    <property type="entry name" value="THYMIDINE PHOSPHORYLASE"/>
    <property type="match status" value="1"/>
</dbReference>
<dbReference type="PANTHER" id="PTHR10515:SF0">
    <property type="entry name" value="THYMIDINE PHOSPHORYLASE"/>
    <property type="match status" value="1"/>
</dbReference>
<dbReference type="Pfam" id="PF02885">
    <property type="entry name" value="Glycos_trans_3N"/>
    <property type="match status" value="1"/>
</dbReference>
<dbReference type="Pfam" id="PF00591">
    <property type="entry name" value="Glycos_transf_3"/>
    <property type="match status" value="1"/>
</dbReference>
<dbReference type="Pfam" id="PF07831">
    <property type="entry name" value="PYNP_C"/>
    <property type="match status" value="1"/>
</dbReference>
<dbReference type="SMART" id="SM00941">
    <property type="entry name" value="PYNP_C"/>
    <property type="match status" value="1"/>
</dbReference>
<dbReference type="SUPFAM" id="SSF52418">
    <property type="entry name" value="Nucleoside phosphorylase/phosphoribosyltransferase catalytic domain"/>
    <property type="match status" value="1"/>
</dbReference>
<dbReference type="SUPFAM" id="SSF47648">
    <property type="entry name" value="Nucleoside phosphorylase/phosphoribosyltransferase N-terminal domain"/>
    <property type="match status" value="1"/>
</dbReference>
<dbReference type="SUPFAM" id="SSF54680">
    <property type="entry name" value="Pyrimidine nucleoside phosphorylase C-terminal domain"/>
    <property type="match status" value="1"/>
</dbReference>
<dbReference type="PROSITE" id="PS00647">
    <property type="entry name" value="THYMID_PHOSPHORYLASE"/>
    <property type="match status" value="1"/>
</dbReference>
<gene>
    <name type="ordered locus">Hbut_0381</name>
</gene>
<reference key="1">
    <citation type="journal article" date="2007" name="Archaea">
        <title>The genome of Hyperthermus butylicus: a sulfur-reducing, peptide fermenting, neutrophilic Crenarchaeote growing up to 108 degrees C.</title>
        <authorList>
            <person name="Bruegger K."/>
            <person name="Chen L."/>
            <person name="Stark M."/>
            <person name="Zibat A."/>
            <person name="Redder P."/>
            <person name="Ruepp A."/>
            <person name="Awayez M."/>
            <person name="She Q."/>
            <person name="Garrett R.A."/>
            <person name="Klenk H.-P."/>
        </authorList>
    </citation>
    <scope>NUCLEOTIDE SEQUENCE [LARGE SCALE GENOMIC DNA]</scope>
    <source>
        <strain>DSM 5456 / JCM 9403 / PLM1-5</strain>
    </source>
</reference>
<keyword id="KW-0328">Glycosyltransferase</keyword>
<keyword id="KW-1185">Reference proteome</keyword>
<keyword id="KW-0808">Transferase</keyword>
<feature type="chain" id="PRO_0000314719" description="AMP phosphorylase">
    <location>
        <begin position="1"/>
        <end position="502"/>
    </location>
</feature>
<feature type="active site" description="Proton donor" evidence="1">
    <location>
        <position position="257"/>
    </location>
</feature>
<feature type="binding site" evidence="1">
    <location>
        <position position="168"/>
    </location>
    <ligand>
        <name>AMP</name>
        <dbReference type="ChEBI" id="CHEBI:456215"/>
    </ligand>
</feature>
<feature type="binding site" evidence="1">
    <location>
        <begin position="195"/>
        <end position="200"/>
    </location>
    <ligand>
        <name>AMP</name>
        <dbReference type="ChEBI" id="CHEBI:456215"/>
    </ligand>
</feature>
<feature type="binding site" evidence="1">
    <location>
        <position position="204"/>
    </location>
    <ligand>
        <name>AMP</name>
        <dbReference type="ChEBI" id="CHEBI:456215"/>
    </ligand>
</feature>
<feature type="binding site" evidence="1">
    <location>
        <position position="265"/>
    </location>
    <ligand>
        <name>AMP</name>
        <dbReference type="ChEBI" id="CHEBI:456215"/>
    </ligand>
</feature>
<feature type="binding site" evidence="1">
    <location>
        <position position="289"/>
    </location>
    <ligand>
        <name>AMP</name>
        <dbReference type="ChEBI" id="CHEBI:456215"/>
    </ligand>
</feature>
<accession>A2BJU0</accession>
<proteinExistence type="inferred from homology"/>